<reference key="1">
    <citation type="journal article" date="2005" name="Nature">
        <title>The map-based sequence of the rice genome.</title>
        <authorList>
            <consortium name="International rice genome sequencing project (IRGSP)"/>
        </authorList>
    </citation>
    <scope>NUCLEOTIDE SEQUENCE [LARGE SCALE GENOMIC DNA]</scope>
    <source>
        <strain>cv. Nipponbare</strain>
    </source>
</reference>
<reference key="2">
    <citation type="journal article" date="2008" name="Nucleic Acids Res.">
        <title>The rice annotation project database (RAP-DB): 2008 update.</title>
        <authorList>
            <consortium name="The rice annotation project (RAP)"/>
        </authorList>
    </citation>
    <scope>GENOME REANNOTATION</scope>
    <source>
        <strain>cv. Nipponbare</strain>
    </source>
</reference>
<reference key="3">
    <citation type="journal article" date="2013" name="Rice">
        <title>Improvement of the Oryza sativa Nipponbare reference genome using next generation sequence and optical map data.</title>
        <authorList>
            <person name="Kawahara Y."/>
            <person name="de la Bastide M."/>
            <person name="Hamilton J.P."/>
            <person name="Kanamori H."/>
            <person name="McCombie W.R."/>
            <person name="Ouyang S."/>
            <person name="Schwartz D.C."/>
            <person name="Tanaka T."/>
            <person name="Wu J."/>
            <person name="Zhou S."/>
            <person name="Childs K.L."/>
            <person name="Davidson R.M."/>
            <person name="Lin H."/>
            <person name="Quesada-Ocampo L."/>
            <person name="Vaillancourt B."/>
            <person name="Sakai H."/>
            <person name="Lee S.S."/>
            <person name="Kim J."/>
            <person name="Numa H."/>
            <person name="Itoh T."/>
            <person name="Buell C.R."/>
            <person name="Matsumoto T."/>
        </authorList>
    </citation>
    <scope>GENOME REANNOTATION</scope>
    <source>
        <strain>cv. Nipponbare</strain>
    </source>
</reference>
<reference key="4">
    <citation type="journal article" date="2006" name="Plant Physiol.">
        <title>Genomic organization, differential expression, and interaction of SQUAMOSA promoter-binding-like transcription factors and microRNA156 in rice.</title>
        <authorList>
            <person name="Xie K."/>
            <person name="Wu C."/>
            <person name="Xiong L."/>
        </authorList>
    </citation>
    <scope>TISSUE SPECIFICITY</scope>
    <scope>GENE FAMILY</scope>
    <scope>NOMENCLATURE</scope>
</reference>
<reference key="5">
    <citation type="journal article" date="2008" name="Gene">
        <title>Comparative study of SBP-box gene family in Arabidopsis and rice.</title>
        <authorList>
            <person name="Yang Z."/>
            <person name="Wang X."/>
            <person name="Gu S."/>
            <person name="Hu Z."/>
            <person name="Xu H."/>
            <person name="Xu C."/>
        </authorList>
    </citation>
    <scope>GENE FAMILY</scope>
</reference>
<protein>
    <recommendedName>
        <fullName>Squamosa promoter-binding-like protein 5</fullName>
    </recommendedName>
</protein>
<name>SPL5_ORYSJ</name>
<comment type="function">
    <text evidence="1">Trans-acting factor that binds specifically to the consensus nucleotide sequence 5'-TNCGTACAA-3'.</text>
</comment>
<comment type="subcellular location">
    <subcellularLocation>
        <location evidence="6">Nucleus</location>
    </subcellularLocation>
</comment>
<comment type="tissue specificity">
    <text evidence="5">Ubiquitous.</text>
</comment>
<comment type="domain">
    <text evidence="1">The SBP-type zinc finger is required for the binding to DNA.</text>
</comment>
<comment type="sequence caution" evidence="6">
    <conflict type="erroneous initiation">
        <sequence resource="EMBL-CDS" id="BAD27984"/>
    </conflict>
    <text>Truncated N-terminus.</text>
</comment>
<comment type="sequence caution" evidence="6">
    <conflict type="erroneous initiation">
        <sequence resource="EMBL-CDS" id="BAF07980"/>
    </conflict>
    <text>Truncated N-terminus.</text>
</comment>
<feature type="chain" id="PRO_0000308228" description="Squamosa promoter-binding-like protein 5">
    <location>
        <begin position="1"/>
        <end position="468"/>
    </location>
</feature>
<feature type="zinc finger region" description="SBP-type" evidence="3">
    <location>
        <begin position="204"/>
        <end position="281"/>
    </location>
</feature>
<feature type="region of interest" description="Disordered" evidence="4">
    <location>
        <begin position="270"/>
        <end position="305"/>
    </location>
</feature>
<feature type="region of interest" description="Disordered" evidence="4">
    <location>
        <begin position="354"/>
        <end position="374"/>
    </location>
</feature>
<feature type="region of interest" description="Disordered" evidence="4">
    <location>
        <begin position="405"/>
        <end position="458"/>
    </location>
</feature>
<feature type="short sequence motif" description="Bipartite nuclear localization signal" evidence="2">
    <location>
        <begin position="264"/>
        <end position="280"/>
    </location>
</feature>
<feature type="compositionally biased region" description="Acidic residues" evidence="4">
    <location>
        <begin position="363"/>
        <end position="372"/>
    </location>
</feature>
<feature type="compositionally biased region" description="Low complexity" evidence="4">
    <location>
        <begin position="438"/>
        <end position="458"/>
    </location>
</feature>
<feature type="binding site" evidence="3">
    <location>
        <position position="207"/>
    </location>
    <ligand>
        <name>Zn(2+)</name>
        <dbReference type="ChEBI" id="CHEBI:29105"/>
        <label>1</label>
    </ligand>
</feature>
<feature type="binding site" evidence="3">
    <location>
        <position position="212"/>
    </location>
    <ligand>
        <name>Zn(2+)</name>
        <dbReference type="ChEBI" id="CHEBI:29105"/>
        <label>1</label>
    </ligand>
</feature>
<feature type="binding site" evidence="3">
    <location>
        <position position="229"/>
    </location>
    <ligand>
        <name>Zn(2+)</name>
        <dbReference type="ChEBI" id="CHEBI:29105"/>
        <label>1</label>
    </ligand>
</feature>
<feature type="binding site" evidence="3">
    <location>
        <position position="232"/>
    </location>
    <ligand>
        <name>Zn(2+)</name>
        <dbReference type="ChEBI" id="CHEBI:29105"/>
        <label>1</label>
    </ligand>
</feature>
<feature type="binding site" evidence="3">
    <location>
        <position position="248"/>
    </location>
    <ligand>
        <name>Zn(2+)</name>
        <dbReference type="ChEBI" id="CHEBI:29105"/>
        <label>2</label>
    </ligand>
</feature>
<feature type="binding site" evidence="3">
    <location>
        <position position="251"/>
    </location>
    <ligand>
        <name>Zn(2+)</name>
        <dbReference type="ChEBI" id="CHEBI:29105"/>
        <label>2</label>
    </ligand>
</feature>
<feature type="binding site" evidence="3">
    <location>
        <position position="255"/>
    </location>
    <ligand>
        <name>Zn(2+)</name>
        <dbReference type="ChEBI" id="CHEBI:29105"/>
        <label>2</label>
    </ligand>
</feature>
<feature type="binding site" evidence="3">
    <location>
        <position position="267"/>
    </location>
    <ligand>
        <name>Zn(2+)</name>
        <dbReference type="ChEBI" id="CHEBI:29105"/>
        <label>2</label>
    </ligand>
</feature>
<gene>
    <name type="primary">SPL5</name>
    <name type="ordered locus">Os02g0177300</name>
    <name type="ordered locus">LOC_Os02g08070</name>
    <name type="ORF">P0504A05.16</name>
</gene>
<evidence type="ECO:0000250" key="1"/>
<evidence type="ECO:0000255" key="2"/>
<evidence type="ECO:0000255" key="3">
    <source>
        <dbReference type="PROSITE-ProRule" id="PRU00470"/>
    </source>
</evidence>
<evidence type="ECO:0000256" key="4">
    <source>
        <dbReference type="SAM" id="MobiDB-lite"/>
    </source>
</evidence>
<evidence type="ECO:0000269" key="5">
    <source>
    </source>
</evidence>
<evidence type="ECO:0000305" key="6"/>
<dbReference type="EMBL" id="AP004838">
    <property type="protein sequence ID" value="BAD27984.1"/>
    <property type="status" value="ALT_INIT"/>
    <property type="molecule type" value="Genomic_DNA"/>
</dbReference>
<dbReference type="EMBL" id="AP008208">
    <property type="protein sequence ID" value="BAF07980.2"/>
    <property type="status" value="ALT_INIT"/>
    <property type="molecule type" value="Genomic_DNA"/>
</dbReference>
<dbReference type="EMBL" id="AP014958">
    <property type="protein sequence ID" value="BAS77264.1"/>
    <property type="molecule type" value="Genomic_DNA"/>
</dbReference>
<dbReference type="SMR" id="Q0E3F8"/>
<dbReference type="FunCoup" id="Q0E3F8">
    <property type="interactions" value="24"/>
</dbReference>
<dbReference type="STRING" id="39947.Q0E3F8"/>
<dbReference type="PaxDb" id="39947-Q0E3F8"/>
<dbReference type="EnsemblPlants" id="Os02t0177300-00">
    <property type="protein sequence ID" value="Os02t0177300-00"/>
    <property type="gene ID" value="Os02g0177300"/>
</dbReference>
<dbReference type="Gramene" id="Os02t0177300-00">
    <property type="protein sequence ID" value="Os02t0177300-00"/>
    <property type="gene ID" value="Os02g0177300"/>
</dbReference>
<dbReference type="KEGG" id="dosa:Os02g0177300"/>
<dbReference type="eggNOG" id="ENOG502QWHY">
    <property type="taxonomic scope" value="Eukaryota"/>
</dbReference>
<dbReference type="HOGENOM" id="CLU_053048_1_0_1"/>
<dbReference type="InParanoid" id="Q0E3F8"/>
<dbReference type="OMA" id="SYTSCDH"/>
<dbReference type="OrthoDB" id="691229at2759"/>
<dbReference type="Proteomes" id="UP000000763">
    <property type="component" value="Chromosome 2"/>
</dbReference>
<dbReference type="Proteomes" id="UP000059680">
    <property type="component" value="Chromosome 2"/>
</dbReference>
<dbReference type="GO" id="GO:0005634">
    <property type="term" value="C:nucleus"/>
    <property type="evidence" value="ECO:0007669"/>
    <property type="project" value="UniProtKB-SubCell"/>
</dbReference>
<dbReference type="GO" id="GO:0003677">
    <property type="term" value="F:DNA binding"/>
    <property type="evidence" value="ECO:0007669"/>
    <property type="project" value="UniProtKB-KW"/>
</dbReference>
<dbReference type="GO" id="GO:0008270">
    <property type="term" value="F:zinc ion binding"/>
    <property type="evidence" value="ECO:0007669"/>
    <property type="project" value="UniProtKB-KW"/>
</dbReference>
<dbReference type="FunFam" id="4.10.1100.10:FF:000001">
    <property type="entry name" value="Squamosa promoter-binding-like protein 14"/>
    <property type="match status" value="1"/>
</dbReference>
<dbReference type="Gene3D" id="4.10.1100.10">
    <property type="entry name" value="Transcription factor, SBP-box domain"/>
    <property type="match status" value="1"/>
</dbReference>
<dbReference type="InterPro" id="IPR044817">
    <property type="entry name" value="SBP-like"/>
</dbReference>
<dbReference type="InterPro" id="IPR004333">
    <property type="entry name" value="SBP_dom"/>
</dbReference>
<dbReference type="InterPro" id="IPR036893">
    <property type="entry name" value="SBP_sf"/>
</dbReference>
<dbReference type="PANTHER" id="PTHR31251">
    <property type="entry name" value="SQUAMOSA PROMOTER-BINDING-LIKE PROTEIN 4"/>
    <property type="match status" value="1"/>
</dbReference>
<dbReference type="PANTHER" id="PTHR31251:SF169">
    <property type="entry name" value="SQUAMOSA PROMOTER-BINDING-LIKE PROTEIN 8"/>
    <property type="match status" value="1"/>
</dbReference>
<dbReference type="Pfam" id="PF03110">
    <property type="entry name" value="SBP"/>
    <property type="match status" value="1"/>
</dbReference>
<dbReference type="SUPFAM" id="SSF103612">
    <property type="entry name" value="SBT domain"/>
    <property type="match status" value="1"/>
</dbReference>
<dbReference type="PROSITE" id="PS51141">
    <property type="entry name" value="ZF_SBP"/>
    <property type="match status" value="1"/>
</dbReference>
<sequence>MMSSRLNAGAMAVPAAAVAADVVDFGYAAPMPPPYVGFDPAGMGGERQLFQHGGACHGLYDGGLDFSAAAAFQEAATLGVGLPGGNLLQSLAPPAAAAATPSSLQMPMMMSLPGLPATAADVYPFGGGGFVKREDGPVLDVVGGGGGGRIGLNLGRRTYFSPADVLAVDRLLLRSRLGGMGMEMGMGMGVLGLGLAAAAHHHQPPRCQAEGCKADLSAAKHYHRRHKVCDFHAKAAAVLAAGKQQRFCQQCSRFHVLAEFDEAKRSCRKRLTEHNRRRRKPTAGGQSSKDSPPPPPSKKGTDASIASSYTSCDHHKAAASTTTASGVSCLQELADHHDVGGGHQAAMAAAPPPTLSLAALPPQEEDDEDEDGGLGNVLMMQQHHQRRRLQHDGDGDDDVAAAAAHHHLMRSLARQQQQHRHSSGCSNNNDGDDDDHNNNNNILSCSSASDQQNSSNNNNMHFFEVDFI</sequence>
<keyword id="KW-0238">DNA-binding</keyword>
<keyword id="KW-0479">Metal-binding</keyword>
<keyword id="KW-0539">Nucleus</keyword>
<keyword id="KW-1185">Reference proteome</keyword>
<keyword id="KW-0804">Transcription</keyword>
<keyword id="KW-0805">Transcription regulation</keyword>
<keyword id="KW-0862">Zinc</keyword>
<keyword id="KW-0863">Zinc-finger</keyword>
<accession>Q0E3F8</accession>
<accession>A0A0P0VFL5</accession>
<accession>Q6ETN6</accession>
<proteinExistence type="evidence at transcript level"/>
<organism>
    <name type="scientific">Oryza sativa subsp. japonica</name>
    <name type="common">Rice</name>
    <dbReference type="NCBI Taxonomy" id="39947"/>
    <lineage>
        <taxon>Eukaryota</taxon>
        <taxon>Viridiplantae</taxon>
        <taxon>Streptophyta</taxon>
        <taxon>Embryophyta</taxon>
        <taxon>Tracheophyta</taxon>
        <taxon>Spermatophyta</taxon>
        <taxon>Magnoliopsida</taxon>
        <taxon>Liliopsida</taxon>
        <taxon>Poales</taxon>
        <taxon>Poaceae</taxon>
        <taxon>BOP clade</taxon>
        <taxon>Oryzoideae</taxon>
        <taxon>Oryzeae</taxon>
        <taxon>Oryzinae</taxon>
        <taxon>Oryza</taxon>
        <taxon>Oryza sativa</taxon>
    </lineage>
</organism>